<keyword id="KW-0175">Coiled coil</keyword>
<keyword id="KW-0403">Intermediate filament</keyword>
<keyword id="KW-0416">Keratin</keyword>
<keyword id="KW-1185">Reference proteome</keyword>
<comment type="subunit">
    <text evidence="4">Heterotetramer of two type I and two type II keratins.</text>
</comment>
<comment type="miscellaneous">
    <text evidence="4">There are two types of hair/microfibrillar keratin, I (acidic) and II (neutral to basic).</text>
</comment>
<comment type="similarity">
    <text evidence="2">Belongs to the intermediate filament family.</text>
</comment>
<organism>
    <name type="scientific">Mus musculus</name>
    <name type="common">Mouse</name>
    <dbReference type="NCBI Taxonomy" id="10090"/>
    <lineage>
        <taxon>Eukaryota</taxon>
        <taxon>Metazoa</taxon>
        <taxon>Chordata</taxon>
        <taxon>Craniata</taxon>
        <taxon>Vertebrata</taxon>
        <taxon>Euteleostomi</taxon>
        <taxon>Mammalia</taxon>
        <taxon>Eutheria</taxon>
        <taxon>Euarchontoglires</taxon>
        <taxon>Glires</taxon>
        <taxon>Rodentia</taxon>
        <taxon>Myomorpha</taxon>
        <taxon>Muroidea</taxon>
        <taxon>Muridae</taxon>
        <taxon>Murinae</taxon>
        <taxon>Mus</taxon>
        <taxon>Mus</taxon>
    </lineage>
</organism>
<sequence>MSCFSSRLGASCGVRAFSCASACGPRPGRCCISAAPYRGISCYRGLSGGFGSRSVCGPFRSGSCGRSFGYRSGGVCGPSPPCITTVSVNESLLTPLNLEIDPNAQCVKHEEKEQIKCLNSKFAAFIDKVRFLEQQNKLLETKWQFYQNRKCCESNMEPLFEGYIEALRREAECVEADSGRLAAELNHVQESMEGYKKRYEEEVALRATSENEFVALKKDVDCAYLRKSDLEANAEALTQETDFLRQLYEEETRLLHSHISDTSVVVKMDNSRDLNMDCVVAEIKAQYDDIASRSRAEAESWYRTKCEEMKATVIRHGETLRRTREEINELNRMIQRLTAEIENAKCQNTKLEAAVTQSEQQGEAALTDARCKLAELEGALQKAKQDMACLLKEYQEVMNSKLGLDVEIITYRRLLEGEEQRLCEGVGSVNVCVSSSRGGVTCGGLTYGTTPGRQIASGPSVTGGSITVMAPDSCSPCQPRASSFTCGSSRSVRFA</sequence>
<gene>
    <name evidence="8" type="primary">Krt87</name>
    <name evidence="3" type="synonym">Kb25</name>
    <name evidence="8" type="synonym">Krt2-25</name>
    <name evidence="8" type="synonym">Krt83</name>
</gene>
<accession>Q6IMF0</accession>
<accession>B2RTF5</accession>
<protein>
    <recommendedName>
        <fullName>Keratin, type II cuticular 87</fullName>
    </recommendedName>
    <alternativeName>
        <fullName evidence="8">Keratin-87</fullName>
        <shortName evidence="4">K87</shortName>
    </alternativeName>
</protein>
<feature type="chain" id="PRO_0000361692" description="Keratin, type II cuticular 87">
    <location>
        <begin position="1"/>
        <end position="495"/>
    </location>
</feature>
<feature type="domain" description="IF rod" evidence="2">
    <location>
        <begin position="111"/>
        <end position="422"/>
    </location>
</feature>
<feature type="region of interest" description="Head" evidence="1">
    <location>
        <begin position="1"/>
        <end position="111"/>
    </location>
</feature>
<feature type="region of interest" description="Coil 1A" evidence="1">
    <location>
        <begin position="112"/>
        <end position="146"/>
    </location>
</feature>
<feature type="region of interest" description="Linker 1" evidence="1">
    <location>
        <begin position="147"/>
        <end position="156"/>
    </location>
</feature>
<feature type="region of interest" description="Coil 1B" evidence="1">
    <location>
        <begin position="157"/>
        <end position="257"/>
    </location>
</feature>
<feature type="region of interest" description="Linker 12" evidence="1">
    <location>
        <begin position="258"/>
        <end position="274"/>
    </location>
</feature>
<feature type="region of interest" description="Coil 2" evidence="1">
    <location>
        <begin position="275"/>
        <end position="418"/>
    </location>
</feature>
<feature type="region of interest" description="Tail" evidence="1">
    <location>
        <begin position="419"/>
        <end position="494"/>
    </location>
</feature>
<feature type="sequence conflict" description="In Ref. 1." evidence="4" ref="1">
    <original>A</original>
    <variation>V</variation>
    <location>
        <position position="456"/>
    </location>
</feature>
<proteinExistence type="evidence at transcript level"/>
<evidence type="ECO:0000255" key="1"/>
<evidence type="ECO:0000255" key="2">
    <source>
        <dbReference type="PROSITE-ProRule" id="PRU01188"/>
    </source>
</evidence>
<evidence type="ECO:0000303" key="3">
    <source>
    </source>
</evidence>
<evidence type="ECO:0000305" key="4"/>
<evidence type="ECO:0000312" key="5">
    <source>
        <dbReference type="EMBL" id="AAI39322.1"/>
    </source>
</evidence>
<evidence type="ECO:0000312" key="6">
    <source>
        <dbReference type="EMBL" id="DAA02058.1"/>
    </source>
</evidence>
<evidence type="ECO:0000312" key="7">
    <source>
        <dbReference type="EMBL" id="EDL04045.1"/>
    </source>
</evidence>
<evidence type="ECO:0000312" key="8">
    <source>
        <dbReference type="MGI" id="MGI:3665486"/>
    </source>
</evidence>
<reference key="1">
    <citation type="journal article" date="2009" name="PLoS Biol.">
        <title>Lineage-specific biology revealed by a finished genome assembly of the mouse.</title>
        <authorList>
            <person name="Church D.M."/>
            <person name="Goodstadt L."/>
            <person name="Hillier L.W."/>
            <person name="Zody M.C."/>
            <person name="Goldstein S."/>
            <person name="She X."/>
            <person name="Bult C.J."/>
            <person name="Agarwala R."/>
            <person name="Cherry J.L."/>
            <person name="DiCuccio M."/>
            <person name="Hlavina W."/>
            <person name="Kapustin Y."/>
            <person name="Meric P."/>
            <person name="Maglott D."/>
            <person name="Birtle Z."/>
            <person name="Marques A.C."/>
            <person name="Graves T."/>
            <person name="Zhou S."/>
            <person name="Teague B."/>
            <person name="Potamousis K."/>
            <person name="Churas C."/>
            <person name="Place M."/>
            <person name="Herschleb J."/>
            <person name="Runnheim R."/>
            <person name="Forrest D."/>
            <person name="Amos-Landgraf J."/>
            <person name="Schwartz D.C."/>
            <person name="Cheng Z."/>
            <person name="Lindblad-Toh K."/>
            <person name="Eichler E.E."/>
            <person name="Ponting C.P."/>
        </authorList>
    </citation>
    <scope>NUCLEOTIDE SEQUENCE [LARGE SCALE GENOMIC DNA]</scope>
    <source>
        <strain>C57BL/6J</strain>
    </source>
</reference>
<reference evidence="4 7" key="2">
    <citation type="submission" date="2005-09" db="EMBL/GenBank/DDBJ databases">
        <authorList>
            <person name="Mural R.J."/>
            <person name="Adams M.D."/>
            <person name="Myers E.W."/>
            <person name="Smith H.O."/>
            <person name="Venter J.C."/>
        </authorList>
    </citation>
    <scope>NUCLEOTIDE SEQUENCE [LARGE SCALE GENOMIC DNA]</scope>
</reference>
<reference evidence="5" key="3">
    <citation type="journal article" date="2004" name="Genome Res.">
        <title>The status, quality, and expansion of the NIH full-length cDNA project: the Mammalian Gene Collection (MGC).</title>
        <authorList>
            <consortium name="The MGC Project Team"/>
        </authorList>
    </citation>
    <scope>NUCLEOTIDE SEQUENCE [LARGE SCALE MRNA]</scope>
    <source>
        <tissue evidence="5">Brain</tissue>
    </source>
</reference>
<reference evidence="6" key="4">
    <citation type="journal article" date="2004" name="Eur. J. Cell Biol.">
        <title>Comprehensive analysis of keratin gene clusters in humans and rodents.</title>
        <authorList>
            <person name="Hesse M."/>
            <person name="Zimek A."/>
            <person name="Weber K."/>
            <person name="Magin T.M."/>
        </authorList>
    </citation>
    <scope>IDENTIFICATION</scope>
</reference>
<dbReference type="EMBL" id="CAAA01196873">
    <property type="status" value="NOT_ANNOTATED_CDS"/>
    <property type="molecule type" value="Genomic_DNA"/>
</dbReference>
<dbReference type="EMBL" id="CH466550">
    <property type="protein sequence ID" value="EDL04045.1"/>
    <property type="molecule type" value="Genomic_DNA"/>
</dbReference>
<dbReference type="EMBL" id="BC139321">
    <property type="protein sequence ID" value="AAI39322.1"/>
    <property type="molecule type" value="mRNA"/>
</dbReference>
<dbReference type="EMBL" id="BC139322">
    <property type="protein sequence ID" value="AAI39323.1"/>
    <property type="molecule type" value="mRNA"/>
</dbReference>
<dbReference type="EMBL" id="BK001583">
    <property type="protein sequence ID" value="DAA02058.1"/>
    <property type="molecule type" value="mRNA"/>
</dbReference>
<dbReference type="CCDS" id="CCDS27852.1"/>
<dbReference type="RefSeq" id="NP_001003668.2">
    <property type="nucleotide sequence ID" value="NM_001003668.2"/>
</dbReference>
<dbReference type="SMR" id="Q6IMF0"/>
<dbReference type="BioGRID" id="240429">
    <property type="interactions" value="5"/>
</dbReference>
<dbReference type="FunCoup" id="Q6IMF0">
    <property type="interactions" value="22"/>
</dbReference>
<dbReference type="STRING" id="10090.ENSMUSP00000080613"/>
<dbReference type="iPTMnet" id="Q6IMF0"/>
<dbReference type="PhosphoSitePlus" id="Q6IMF0"/>
<dbReference type="jPOST" id="Q6IMF0"/>
<dbReference type="PaxDb" id="10090-ENSMUSP00000080613"/>
<dbReference type="PeptideAtlas" id="Q6IMF0"/>
<dbReference type="ProteomicsDB" id="263466"/>
<dbReference type="DNASU" id="406219"/>
<dbReference type="Ensembl" id="ENSMUST00000081945.5">
    <property type="protein sequence ID" value="ENSMUSP00000080613.4"/>
    <property type="gene ID" value="ENSMUSG00000047641.9"/>
</dbReference>
<dbReference type="GeneID" id="406219"/>
<dbReference type="KEGG" id="mmu:406219"/>
<dbReference type="UCSC" id="uc007xte.2">
    <property type="organism name" value="mouse"/>
</dbReference>
<dbReference type="AGR" id="MGI:3665486"/>
<dbReference type="CTD" id="406219"/>
<dbReference type="MGI" id="MGI:3665486">
    <property type="gene designation" value="Krt87"/>
</dbReference>
<dbReference type="VEuPathDB" id="HostDB:ENSMUSG00000047641"/>
<dbReference type="eggNOG" id="ENOG502SK5S">
    <property type="taxonomic scope" value="Eukaryota"/>
</dbReference>
<dbReference type="GeneTree" id="ENSGT00940000154026"/>
<dbReference type="HOGENOM" id="CLU_012560_5_0_1"/>
<dbReference type="InParanoid" id="Q6IMF0"/>
<dbReference type="OMA" id="IGSACNA"/>
<dbReference type="OrthoDB" id="2441647at2759"/>
<dbReference type="PhylomeDB" id="Q6IMF0"/>
<dbReference type="TreeFam" id="TF317854"/>
<dbReference type="Reactome" id="R-MMU-6805567">
    <property type="pathway name" value="Keratinization"/>
</dbReference>
<dbReference type="Reactome" id="R-MMU-6809371">
    <property type="pathway name" value="Formation of the cornified envelope"/>
</dbReference>
<dbReference type="BioGRID-ORCS" id="406219">
    <property type="hits" value="0 hits in 1 CRISPR screen"/>
</dbReference>
<dbReference type="PRO" id="PR:Q6IMF0"/>
<dbReference type="Proteomes" id="UP000000589">
    <property type="component" value="Chromosome 15"/>
</dbReference>
<dbReference type="RNAct" id="Q6IMF0">
    <property type="molecule type" value="protein"/>
</dbReference>
<dbReference type="Bgee" id="ENSMUSG00000047641">
    <property type="expression patterns" value="Expressed in lip and 15 other cell types or tissues"/>
</dbReference>
<dbReference type="GO" id="GO:0045095">
    <property type="term" value="C:keratin filament"/>
    <property type="evidence" value="ECO:0007669"/>
    <property type="project" value="InterPro"/>
</dbReference>
<dbReference type="FunFam" id="1.20.5.1160:FF:000001">
    <property type="entry name" value="Keratin type II"/>
    <property type="match status" value="1"/>
</dbReference>
<dbReference type="FunFam" id="1.20.5.170:FF:000004">
    <property type="entry name" value="Keratin, type II cytoskeletal 5"/>
    <property type="match status" value="1"/>
</dbReference>
<dbReference type="FunFam" id="1.20.5.500:FF:000001">
    <property type="entry name" value="Type II keratin 23"/>
    <property type="match status" value="1"/>
</dbReference>
<dbReference type="Gene3D" id="1.20.5.170">
    <property type="match status" value="1"/>
</dbReference>
<dbReference type="Gene3D" id="1.20.5.500">
    <property type="entry name" value="Single helix bin"/>
    <property type="match status" value="1"/>
</dbReference>
<dbReference type="Gene3D" id="1.20.5.1160">
    <property type="entry name" value="Vasodilator-stimulated phosphoprotein"/>
    <property type="match status" value="1"/>
</dbReference>
<dbReference type="InterPro" id="IPR018039">
    <property type="entry name" value="IF_conserved"/>
</dbReference>
<dbReference type="InterPro" id="IPR039008">
    <property type="entry name" value="IF_rod_dom"/>
</dbReference>
<dbReference type="InterPro" id="IPR032444">
    <property type="entry name" value="Keratin_2_head"/>
</dbReference>
<dbReference type="InterPro" id="IPR003054">
    <property type="entry name" value="Keratin_II"/>
</dbReference>
<dbReference type="PANTHER" id="PTHR45616">
    <property type="entry name" value="GATA-TYPE DOMAIN-CONTAINING PROTEIN"/>
    <property type="match status" value="1"/>
</dbReference>
<dbReference type="PANTHER" id="PTHR45616:SF52">
    <property type="entry name" value="KERATIN, TYPE II CUTICULAR HB3"/>
    <property type="match status" value="1"/>
</dbReference>
<dbReference type="Pfam" id="PF00038">
    <property type="entry name" value="Filament"/>
    <property type="match status" value="1"/>
</dbReference>
<dbReference type="Pfam" id="PF16208">
    <property type="entry name" value="Keratin_2_head"/>
    <property type="match status" value="1"/>
</dbReference>
<dbReference type="PRINTS" id="PR01276">
    <property type="entry name" value="TYPE2KERATIN"/>
</dbReference>
<dbReference type="SMART" id="SM01391">
    <property type="entry name" value="Filament"/>
    <property type="match status" value="1"/>
</dbReference>
<dbReference type="SUPFAM" id="SSF64593">
    <property type="entry name" value="Intermediate filament protein, coiled coil region"/>
    <property type="match status" value="2"/>
</dbReference>
<dbReference type="PROSITE" id="PS00226">
    <property type="entry name" value="IF_ROD_1"/>
    <property type="match status" value="1"/>
</dbReference>
<dbReference type="PROSITE" id="PS51842">
    <property type="entry name" value="IF_ROD_2"/>
    <property type="match status" value="1"/>
</dbReference>
<name>KRT87_MOUSE</name>